<comment type="function">
    <text evidence="1">DNA-dependent RNA polymerase catalyzes the transcription of DNA into RNA using the four ribonucleoside triphosphates as substrates.</text>
</comment>
<comment type="catalytic activity">
    <reaction evidence="1">
        <text>RNA(n) + a ribonucleoside 5'-triphosphate = RNA(n+1) + diphosphate</text>
        <dbReference type="Rhea" id="RHEA:21248"/>
        <dbReference type="Rhea" id="RHEA-COMP:14527"/>
        <dbReference type="Rhea" id="RHEA-COMP:17342"/>
        <dbReference type="ChEBI" id="CHEBI:33019"/>
        <dbReference type="ChEBI" id="CHEBI:61557"/>
        <dbReference type="ChEBI" id="CHEBI:140395"/>
        <dbReference type="EC" id="2.7.7.6"/>
    </reaction>
</comment>
<comment type="cofactor">
    <cofactor evidence="1">
        <name>Mg(2+)</name>
        <dbReference type="ChEBI" id="CHEBI:18420"/>
    </cofactor>
    <text evidence="1">Binds 1 Mg(2+) ion per subunit.</text>
</comment>
<comment type="cofactor">
    <cofactor evidence="1">
        <name>Zn(2+)</name>
        <dbReference type="ChEBI" id="CHEBI:29105"/>
    </cofactor>
    <text evidence="1">Binds 2 Zn(2+) ions per subunit.</text>
</comment>
<comment type="subunit">
    <text evidence="1">The RNAP catalytic core consists of 2 alpha, 1 beta, 1 beta' and 1 omega subunit. When a sigma factor is associated with the core the holoenzyme is formed, which can initiate transcription.</text>
</comment>
<comment type="similarity">
    <text evidence="1">Belongs to the RNA polymerase beta' chain family.</text>
</comment>
<evidence type="ECO:0000255" key="1">
    <source>
        <dbReference type="HAMAP-Rule" id="MF_01322"/>
    </source>
</evidence>
<sequence>MKDLLKLLKPTNQAEEFDGIRIALSSPDMIRSWSYGEVKKPETINYRTFKPERDGLFCARIFGPVKDYECLCGKYKRLKHRGVICEKCGVEVTLTKVRRERMGHIELASPVAHIWFLKSLPSRIGLMLDMTLRDIERVLYFESYVVTEGGLTSLEQGQILTEDEYLDALEEHGDEFDAKMGAEAVLDLLRAVDIDGDVQKLREELPETNSETKRKKISKRLKLLEAFQVSNNKPEWMILKVLPILPPDLRPLVPLDGGRFATSDLNDLYRRVINRNNRLKRLLDLAAPDIIVRNEKRMLQEAVDALLDNGRRGRAITGSNKRPLKSLADMIKGKQGRFRQNLLGKRVDYSGRSVITVGPKLRLHQCGLPKKMALELFKPFIYGKLERRGLATTIKAAKKMVERETAEVWDVLDEVIKEHPVLLNRAPTLHRLGIQAFEPVLIEGKAIQLHPLVCAAYNADFDGDQMAVHLPLTLEAQLEARALMMSTNNVLSPASGDPIIVPSQDVVLGLYYMTKEKINGKGEGMVFKDPNEAEKAYRTGQVELHSRVRVRITDTTIDDDGNRTTKTELRDTTCGRAILSLIMPEGLPFELINQAMGKKPIGRMLNKAYRDLGLKDTVVFADQIMYTGFHYAMVSGASVGINDMVIPEAKKEIVSAAEEEVAEIQEQFESGLVTAGEKYNKVIDIWSTANEKVSKAMMDNLSKEIVKNKDGEDEEQASFNSVFMMADSGARGSPAQIRQLAGMRGLMAKPDGSIIETPIVANFREGLNVLQYFISTHGARKGLADTALKTANSGYLTRRLVDVSQDVVIMEEDCGTYEGLYMKPLIEGGDVVEPLRERVLGRVLCEPVMKPGSEEELLPRNTLLDEKMCDVLEENSIDEVKVRSVITCDTDFGVCAHCYGRDLARGHMVNQGEAVGVIAAQSIGEPGTQLTMRTFHIGGAASRATAENNIQVKNPGTIKLHNAKWVVNSDKAHVITSRSTELTLTDEYGRERERYKVPYGAVLKKGEGDSVDGGETVANWDPHTHPIITEVEGRIKFVDLIDGVTMTRQTDELTGLSSIVVLETGQRTSAGKDMRPMVKLVDGKGNDVNIAGTDIPAQYFLPGNAIINLEDNSEVKIGDTLARIPQEGSKTRDITGGLPRVADLFEARKPKEPAILAEKTGTVSFGKETKGKRRLLITPTDGGDQHEEMIPKWRQLNVFEGEQVTKGEVIADGPEAPHDILRLRGVSAVANYIVNEVQEVYRLQGVKINDKHIETIVRQMLRKALILRAGDTNLLEGEMVEMSEVLAANAKAEADGKKPAIFERQLLGITKASLSTESFISAASFQETTRVLTEAAVGGKKDSLRGLKENVIVGRLIPAGTGYSYHKERMQRRLDELNVDIEPTMTAEQAEQQLADALNAGNSSAGDDSAE</sequence>
<gene>
    <name evidence="1" type="primary">rpoC</name>
    <name type="ordered locus">IL0346</name>
</gene>
<reference key="1">
    <citation type="journal article" date="2004" name="Proc. Natl. Acad. Sci. U.S.A.">
        <title>Genome sequence of the deep-sea gamma-proteobacterium Idiomarina loihiensis reveals amino acid fermentation as a source of carbon and energy.</title>
        <authorList>
            <person name="Hou S."/>
            <person name="Saw J.H."/>
            <person name="Lee K.S."/>
            <person name="Freitas T.A."/>
            <person name="Belisle C."/>
            <person name="Kawarabayasi Y."/>
            <person name="Donachie S.P."/>
            <person name="Pikina A."/>
            <person name="Galperin M.Y."/>
            <person name="Koonin E.V."/>
            <person name="Makarova K.S."/>
            <person name="Omelchenko M.V."/>
            <person name="Sorokin A."/>
            <person name="Wolf Y.I."/>
            <person name="Li Q.X."/>
            <person name="Keum Y.S."/>
            <person name="Campbell S."/>
            <person name="Denery J."/>
            <person name="Aizawa S."/>
            <person name="Shibata S."/>
            <person name="Malahoff A."/>
            <person name="Alam M."/>
        </authorList>
    </citation>
    <scope>NUCLEOTIDE SEQUENCE [LARGE SCALE GENOMIC DNA]</scope>
    <source>
        <strain>ATCC BAA-735 / DSM 15497 / L2-TR</strain>
    </source>
</reference>
<proteinExistence type="inferred from homology"/>
<protein>
    <recommendedName>
        <fullName evidence="1">DNA-directed RNA polymerase subunit beta'</fullName>
        <shortName evidence="1">RNAP subunit beta'</shortName>
        <ecNumber evidence="1">2.7.7.6</ecNumber>
    </recommendedName>
    <alternativeName>
        <fullName evidence="1">RNA polymerase subunit beta'</fullName>
    </alternativeName>
    <alternativeName>
        <fullName evidence="1">Transcriptase subunit beta'</fullName>
    </alternativeName>
</protein>
<keyword id="KW-0240">DNA-directed RNA polymerase</keyword>
<keyword id="KW-0460">Magnesium</keyword>
<keyword id="KW-0479">Metal-binding</keyword>
<keyword id="KW-0548">Nucleotidyltransferase</keyword>
<keyword id="KW-1185">Reference proteome</keyword>
<keyword id="KW-0804">Transcription</keyword>
<keyword id="KW-0808">Transferase</keyword>
<keyword id="KW-0862">Zinc</keyword>
<accession>Q5QWA4</accession>
<organism>
    <name type="scientific">Idiomarina loihiensis (strain ATCC BAA-735 / DSM 15497 / L2-TR)</name>
    <dbReference type="NCBI Taxonomy" id="283942"/>
    <lineage>
        <taxon>Bacteria</taxon>
        <taxon>Pseudomonadati</taxon>
        <taxon>Pseudomonadota</taxon>
        <taxon>Gammaproteobacteria</taxon>
        <taxon>Alteromonadales</taxon>
        <taxon>Idiomarinaceae</taxon>
        <taxon>Idiomarina</taxon>
    </lineage>
</organism>
<name>RPOC_IDILO</name>
<feature type="chain" id="PRO_0000225541" description="DNA-directed RNA polymerase subunit beta'">
    <location>
        <begin position="1"/>
        <end position="1411"/>
    </location>
</feature>
<feature type="binding site" evidence="1">
    <location>
        <position position="70"/>
    </location>
    <ligand>
        <name>Zn(2+)</name>
        <dbReference type="ChEBI" id="CHEBI:29105"/>
        <label>1</label>
    </ligand>
</feature>
<feature type="binding site" evidence="1">
    <location>
        <position position="72"/>
    </location>
    <ligand>
        <name>Zn(2+)</name>
        <dbReference type="ChEBI" id="CHEBI:29105"/>
        <label>1</label>
    </ligand>
</feature>
<feature type="binding site" evidence="1">
    <location>
        <position position="85"/>
    </location>
    <ligand>
        <name>Zn(2+)</name>
        <dbReference type="ChEBI" id="CHEBI:29105"/>
        <label>1</label>
    </ligand>
</feature>
<feature type="binding site" evidence="1">
    <location>
        <position position="88"/>
    </location>
    <ligand>
        <name>Zn(2+)</name>
        <dbReference type="ChEBI" id="CHEBI:29105"/>
        <label>1</label>
    </ligand>
</feature>
<feature type="binding site" evidence="1">
    <location>
        <position position="460"/>
    </location>
    <ligand>
        <name>Mg(2+)</name>
        <dbReference type="ChEBI" id="CHEBI:18420"/>
    </ligand>
</feature>
<feature type="binding site" evidence="1">
    <location>
        <position position="462"/>
    </location>
    <ligand>
        <name>Mg(2+)</name>
        <dbReference type="ChEBI" id="CHEBI:18420"/>
    </ligand>
</feature>
<feature type="binding site" evidence="1">
    <location>
        <position position="464"/>
    </location>
    <ligand>
        <name>Mg(2+)</name>
        <dbReference type="ChEBI" id="CHEBI:18420"/>
    </ligand>
</feature>
<feature type="binding site" evidence="1">
    <location>
        <position position="814"/>
    </location>
    <ligand>
        <name>Zn(2+)</name>
        <dbReference type="ChEBI" id="CHEBI:29105"/>
        <label>2</label>
    </ligand>
</feature>
<feature type="binding site" evidence="1">
    <location>
        <position position="888"/>
    </location>
    <ligand>
        <name>Zn(2+)</name>
        <dbReference type="ChEBI" id="CHEBI:29105"/>
        <label>2</label>
    </ligand>
</feature>
<feature type="binding site" evidence="1">
    <location>
        <position position="895"/>
    </location>
    <ligand>
        <name>Zn(2+)</name>
        <dbReference type="ChEBI" id="CHEBI:29105"/>
        <label>2</label>
    </ligand>
</feature>
<feature type="binding site" evidence="1">
    <location>
        <position position="898"/>
    </location>
    <ligand>
        <name>Zn(2+)</name>
        <dbReference type="ChEBI" id="CHEBI:29105"/>
        <label>2</label>
    </ligand>
</feature>
<dbReference type="EC" id="2.7.7.6" evidence="1"/>
<dbReference type="EMBL" id="AE017340">
    <property type="protein sequence ID" value="AAV81189.1"/>
    <property type="molecule type" value="Genomic_DNA"/>
</dbReference>
<dbReference type="RefSeq" id="WP_011233608.1">
    <property type="nucleotide sequence ID" value="NC_006512.1"/>
</dbReference>
<dbReference type="SMR" id="Q5QWA4"/>
<dbReference type="STRING" id="283942.IL0346"/>
<dbReference type="GeneID" id="41335498"/>
<dbReference type="KEGG" id="ilo:IL0346"/>
<dbReference type="eggNOG" id="COG0086">
    <property type="taxonomic scope" value="Bacteria"/>
</dbReference>
<dbReference type="HOGENOM" id="CLU_000524_3_1_6"/>
<dbReference type="OrthoDB" id="9815296at2"/>
<dbReference type="Proteomes" id="UP000001171">
    <property type="component" value="Chromosome"/>
</dbReference>
<dbReference type="GO" id="GO:0000428">
    <property type="term" value="C:DNA-directed RNA polymerase complex"/>
    <property type="evidence" value="ECO:0007669"/>
    <property type="project" value="UniProtKB-KW"/>
</dbReference>
<dbReference type="GO" id="GO:0003677">
    <property type="term" value="F:DNA binding"/>
    <property type="evidence" value="ECO:0007669"/>
    <property type="project" value="UniProtKB-UniRule"/>
</dbReference>
<dbReference type="GO" id="GO:0003899">
    <property type="term" value="F:DNA-directed RNA polymerase activity"/>
    <property type="evidence" value="ECO:0007669"/>
    <property type="project" value="UniProtKB-UniRule"/>
</dbReference>
<dbReference type="GO" id="GO:0000287">
    <property type="term" value="F:magnesium ion binding"/>
    <property type="evidence" value="ECO:0007669"/>
    <property type="project" value="UniProtKB-UniRule"/>
</dbReference>
<dbReference type="GO" id="GO:0008270">
    <property type="term" value="F:zinc ion binding"/>
    <property type="evidence" value="ECO:0007669"/>
    <property type="project" value="UniProtKB-UniRule"/>
</dbReference>
<dbReference type="GO" id="GO:0006351">
    <property type="term" value="P:DNA-templated transcription"/>
    <property type="evidence" value="ECO:0007669"/>
    <property type="project" value="UniProtKB-UniRule"/>
</dbReference>
<dbReference type="CDD" id="cd02655">
    <property type="entry name" value="RNAP_beta'_C"/>
    <property type="match status" value="1"/>
</dbReference>
<dbReference type="CDD" id="cd01609">
    <property type="entry name" value="RNAP_beta'_N"/>
    <property type="match status" value="1"/>
</dbReference>
<dbReference type="FunFam" id="1.10.132.30:FF:000003">
    <property type="entry name" value="DNA-directed RNA polymerase subunit beta"/>
    <property type="match status" value="1"/>
</dbReference>
<dbReference type="FunFam" id="1.10.150.390:FF:000002">
    <property type="entry name" value="DNA-directed RNA polymerase subunit beta"/>
    <property type="match status" value="1"/>
</dbReference>
<dbReference type="FunFam" id="1.10.40.90:FF:000001">
    <property type="entry name" value="DNA-directed RNA polymerase subunit beta"/>
    <property type="match status" value="1"/>
</dbReference>
<dbReference type="FunFam" id="4.10.860.120:FF:000001">
    <property type="entry name" value="DNA-directed RNA polymerase subunit beta"/>
    <property type="match status" value="1"/>
</dbReference>
<dbReference type="Gene3D" id="1.10.132.30">
    <property type="match status" value="1"/>
</dbReference>
<dbReference type="Gene3D" id="1.10.150.390">
    <property type="match status" value="1"/>
</dbReference>
<dbReference type="Gene3D" id="1.10.1790.20">
    <property type="match status" value="1"/>
</dbReference>
<dbReference type="Gene3D" id="1.10.40.90">
    <property type="match status" value="1"/>
</dbReference>
<dbReference type="Gene3D" id="2.40.40.20">
    <property type="match status" value="1"/>
</dbReference>
<dbReference type="Gene3D" id="2.40.50.100">
    <property type="match status" value="3"/>
</dbReference>
<dbReference type="Gene3D" id="4.10.860.120">
    <property type="entry name" value="RNA polymerase II, clamp domain"/>
    <property type="match status" value="1"/>
</dbReference>
<dbReference type="Gene3D" id="1.10.274.100">
    <property type="entry name" value="RNA polymerase Rpb1, domain 3"/>
    <property type="match status" value="1"/>
</dbReference>
<dbReference type="HAMAP" id="MF_01322">
    <property type="entry name" value="RNApol_bact_RpoC"/>
    <property type="match status" value="1"/>
</dbReference>
<dbReference type="InterPro" id="IPR045867">
    <property type="entry name" value="DNA-dir_RpoC_beta_prime"/>
</dbReference>
<dbReference type="InterPro" id="IPR012754">
    <property type="entry name" value="DNA-dir_RpoC_beta_prime_bact"/>
</dbReference>
<dbReference type="InterPro" id="IPR000722">
    <property type="entry name" value="RNA_pol_asu"/>
</dbReference>
<dbReference type="InterPro" id="IPR006592">
    <property type="entry name" value="RNA_pol_N"/>
</dbReference>
<dbReference type="InterPro" id="IPR007080">
    <property type="entry name" value="RNA_pol_Rpb1_1"/>
</dbReference>
<dbReference type="InterPro" id="IPR007066">
    <property type="entry name" value="RNA_pol_Rpb1_3"/>
</dbReference>
<dbReference type="InterPro" id="IPR042102">
    <property type="entry name" value="RNA_pol_Rpb1_3_sf"/>
</dbReference>
<dbReference type="InterPro" id="IPR007083">
    <property type="entry name" value="RNA_pol_Rpb1_4"/>
</dbReference>
<dbReference type="InterPro" id="IPR007081">
    <property type="entry name" value="RNA_pol_Rpb1_5"/>
</dbReference>
<dbReference type="InterPro" id="IPR044893">
    <property type="entry name" value="RNA_pol_Rpb1_clamp_domain"/>
</dbReference>
<dbReference type="InterPro" id="IPR038120">
    <property type="entry name" value="Rpb1_funnel_sf"/>
</dbReference>
<dbReference type="NCBIfam" id="TIGR02386">
    <property type="entry name" value="rpoC_TIGR"/>
    <property type="match status" value="1"/>
</dbReference>
<dbReference type="PANTHER" id="PTHR19376">
    <property type="entry name" value="DNA-DIRECTED RNA POLYMERASE"/>
    <property type="match status" value="1"/>
</dbReference>
<dbReference type="PANTHER" id="PTHR19376:SF54">
    <property type="entry name" value="DNA-DIRECTED RNA POLYMERASE SUBUNIT BETA"/>
    <property type="match status" value="1"/>
</dbReference>
<dbReference type="Pfam" id="PF04997">
    <property type="entry name" value="RNA_pol_Rpb1_1"/>
    <property type="match status" value="1"/>
</dbReference>
<dbReference type="Pfam" id="PF00623">
    <property type="entry name" value="RNA_pol_Rpb1_2"/>
    <property type="match status" value="2"/>
</dbReference>
<dbReference type="Pfam" id="PF04983">
    <property type="entry name" value="RNA_pol_Rpb1_3"/>
    <property type="match status" value="1"/>
</dbReference>
<dbReference type="Pfam" id="PF05000">
    <property type="entry name" value="RNA_pol_Rpb1_4"/>
    <property type="match status" value="1"/>
</dbReference>
<dbReference type="Pfam" id="PF04998">
    <property type="entry name" value="RNA_pol_Rpb1_5"/>
    <property type="match status" value="1"/>
</dbReference>
<dbReference type="SMART" id="SM00663">
    <property type="entry name" value="RPOLA_N"/>
    <property type="match status" value="1"/>
</dbReference>
<dbReference type="SUPFAM" id="SSF64484">
    <property type="entry name" value="beta and beta-prime subunits of DNA dependent RNA-polymerase"/>
    <property type="match status" value="1"/>
</dbReference>